<sequence>MNERVKQVASALVDAIQKTLTEQRVTEEEWRAGVGYMMKLAEAKEVAVLLDAFFNHTIVDLKAQATRGSRPAMQGPYFLEGAPVVAGALKTYEDDSHHPLVIRGAVRTDDGAPAAGAVIDVWHSTPDGKYSGIHDQIPTDMYRGKVVADAQGKYAVRTTMPAPYQIPNKGPTGVLLEMMGSHTWRPAHVHFKVRKDGFAPLTTQYYFEGGDWVDSDCCKGVAPDLVMPTKTEGGAQVMDIDFVIERAREHV</sequence>
<gene>
    <name evidence="3" type="primary">tcbC</name>
</gene>
<feature type="chain" id="PRO_0000085089" description="Chlorocatechol 1,2-dioxygenase">
    <location>
        <begin position="1"/>
        <end position="251"/>
    </location>
</feature>
<feature type="binding site" evidence="1">
    <location>
        <position position="130"/>
    </location>
    <ligand>
        <name>Fe cation</name>
        <dbReference type="ChEBI" id="CHEBI:24875"/>
    </ligand>
</feature>
<feature type="binding site" evidence="1">
    <location>
        <position position="164"/>
    </location>
    <ligand>
        <name>Fe cation</name>
        <dbReference type="ChEBI" id="CHEBI:24875"/>
    </ligand>
</feature>
<feature type="binding site" evidence="1">
    <location>
        <position position="188"/>
    </location>
    <ligand>
        <name>Fe cation</name>
        <dbReference type="ChEBI" id="CHEBI:24875"/>
    </ligand>
</feature>
<feature type="binding site" evidence="1">
    <location>
        <position position="190"/>
    </location>
    <ligand>
        <name>Fe cation</name>
        <dbReference type="ChEBI" id="CHEBI:24875"/>
    </ligand>
</feature>
<organism>
    <name type="scientific">Pseudomonas sp. (strain P51)</name>
    <dbReference type="NCBI Taxonomy" id="65067"/>
    <lineage>
        <taxon>Bacteria</taxon>
        <taxon>Pseudomonadati</taxon>
        <taxon>Pseudomonadota</taxon>
        <taxon>Gammaproteobacteria</taxon>
        <taxon>Pseudomonadales</taxon>
        <taxon>Pseudomonadaceae</taxon>
        <taxon>Pseudomonas</taxon>
    </lineage>
</organism>
<protein>
    <recommendedName>
        <fullName evidence="3">Chlorocatechol 1,2-dioxygenase</fullName>
        <ecNumber evidence="2">1.13.11.-</ecNumber>
    </recommendedName>
    <alternativeName>
        <fullName evidence="3">Chlorocatechol 1,2-dioxygenase II</fullName>
    </alternativeName>
</protein>
<dbReference type="EC" id="1.13.11.-" evidence="2"/>
<dbReference type="EMBL" id="M57629">
    <property type="protein sequence ID" value="AAD13625.1"/>
    <property type="molecule type" value="Genomic_DNA"/>
</dbReference>
<dbReference type="PIR" id="A43673">
    <property type="entry name" value="A43673"/>
</dbReference>
<dbReference type="SMR" id="P27098"/>
<dbReference type="KEGG" id="ag:AAD13625"/>
<dbReference type="BioCyc" id="MetaCyc:MONOMER-14402"/>
<dbReference type="GO" id="GO:0018576">
    <property type="term" value="F:catechol 1,2-dioxygenase activity"/>
    <property type="evidence" value="ECO:0007669"/>
    <property type="project" value="InterPro"/>
</dbReference>
<dbReference type="GO" id="GO:0008199">
    <property type="term" value="F:ferric iron binding"/>
    <property type="evidence" value="ECO:0007669"/>
    <property type="project" value="InterPro"/>
</dbReference>
<dbReference type="GO" id="GO:0009056">
    <property type="term" value="P:catabolic process"/>
    <property type="evidence" value="ECO:0007669"/>
    <property type="project" value="UniProtKB-KW"/>
</dbReference>
<dbReference type="GO" id="GO:0009712">
    <property type="term" value="P:catechol-containing compound metabolic process"/>
    <property type="evidence" value="ECO:0007669"/>
    <property type="project" value="InterPro"/>
</dbReference>
<dbReference type="CDD" id="cd03462">
    <property type="entry name" value="1_2-CCD"/>
    <property type="match status" value="1"/>
</dbReference>
<dbReference type="Gene3D" id="2.60.130.10">
    <property type="entry name" value="Aromatic compound dioxygenase"/>
    <property type="match status" value="1"/>
</dbReference>
<dbReference type="InterPro" id="IPR007535">
    <property type="entry name" value="Catechol_dOase_N"/>
</dbReference>
<dbReference type="InterPro" id="IPR012817">
    <property type="entry name" value="Chlorcchol_dOase"/>
</dbReference>
<dbReference type="InterPro" id="IPR000627">
    <property type="entry name" value="Intradiol_dOase_C"/>
</dbReference>
<dbReference type="InterPro" id="IPR015889">
    <property type="entry name" value="Intradiol_dOase_core"/>
</dbReference>
<dbReference type="InterPro" id="IPR050770">
    <property type="entry name" value="Intradiol_RC_Dioxygenase"/>
</dbReference>
<dbReference type="NCBIfam" id="TIGR02465">
    <property type="entry name" value="chlorocat_1_2"/>
    <property type="match status" value="1"/>
</dbReference>
<dbReference type="PANTHER" id="PTHR33711">
    <property type="entry name" value="DIOXYGENASE, PUTATIVE (AFU_ORTHOLOGUE AFUA_2G02910)-RELATED"/>
    <property type="match status" value="1"/>
</dbReference>
<dbReference type="PANTHER" id="PTHR33711:SF7">
    <property type="entry name" value="INTRADIOL RING-CLEAVAGE DIOXYGENASES DOMAIN-CONTAINING PROTEIN-RELATED"/>
    <property type="match status" value="1"/>
</dbReference>
<dbReference type="Pfam" id="PF00775">
    <property type="entry name" value="Dioxygenase_C"/>
    <property type="match status" value="1"/>
</dbReference>
<dbReference type="Pfam" id="PF04444">
    <property type="entry name" value="Dioxygenase_N"/>
    <property type="match status" value="1"/>
</dbReference>
<dbReference type="SUPFAM" id="SSF49482">
    <property type="entry name" value="Aromatic compound dioxygenase"/>
    <property type="match status" value="1"/>
</dbReference>
<dbReference type="PROSITE" id="PS00083">
    <property type="entry name" value="INTRADIOL_DIOXYGENAS"/>
    <property type="match status" value="1"/>
</dbReference>
<evidence type="ECO:0000250" key="1">
    <source>
        <dbReference type="UniProtKB" id="Q5PXQ6"/>
    </source>
</evidence>
<evidence type="ECO:0000269" key="2">
    <source>
    </source>
</evidence>
<evidence type="ECO:0000303" key="3">
    <source>
    </source>
</evidence>
<evidence type="ECO:0000305" key="4"/>
<evidence type="ECO:0000305" key="5">
    <source>
    </source>
</evidence>
<proteinExistence type="evidence at protein level"/>
<name>TCBC_PSESQ</name>
<geneLocation type="plasmid">
    <name>pP51</name>
</geneLocation>
<keyword id="KW-0058">Aromatic hydrocarbons catabolism</keyword>
<keyword id="KW-0223">Dioxygenase</keyword>
<keyword id="KW-0408">Iron</keyword>
<keyword id="KW-0479">Metal-binding</keyword>
<keyword id="KW-0560">Oxidoreductase</keyword>
<keyword id="KW-0614">Plasmid</keyword>
<reference key="1">
    <citation type="journal article" date="1991" name="J. Bacteriol.">
        <title>Sequence analysis of the Pseudomonas sp. strain P51 tcb gene cluster, which encodes metabolism of chlorinated catechols: evidence for specialization of catechol 1,2-dioxygenases for chlorinated substrates.</title>
        <authorList>
            <person name="van der Meer J.R."/>
            <person name="Eggen R.I."/>
            <person name="Zehnder A.J."/>
            <person name="de Vos W.M."/>
        </authorList>
    </citation>
    <scope>NUCLEOTIDE SEQUENCE [GENOMIC DNA]</scope>
    <scope>FUNCTION</scope>
    <scope>CATALYTIC ACTIVITY</scope>
    <scope>SUBSTRATE SPECIFICITY</scope>
    <scope>PATHWAY</scope>
    <source>
        <strain>P51</strain>
        <plasmid>pP51</plasmid>
    </source>
</reference>
<accession>P27098</accession>
<comment type="function">
    <text evidence="2">Chlorocatechol 1,2-dioxygenase involved in the degradation of chlorinated benzenes, that occurs via chlorocatechol intermediates. Displays broad substrate specificity. Preferentially cleaves 3-chlorocatechol and 3,4-dichlorocatechol, and shows lower activity on 3,5-dichlorocatechol, 3,6-dichlorocatechol and 3,4,6-trichlorocatechol in vitro. Is not able to convert 3,4,5-trichlorocatechol and 3,4,5,6-tetrachlorocatechol. Thus, probably functions in the degradation pathways of 1,2-dichlorobenzene, 1,4-dichlorobenzene and 1,2,4-trichlorobenzene (via 3,4-dichlorocatechol, 3,6-dichlorocatechol and 3,4,6-trichlorocatechol intermediates, respectively), which allow Pseudomonas sp. strain P51 to grow on these substrates as the sole carbon and energy source.</text>
</comment>
<comment type="catalytic activity">
    <reaction evidence="2">
        <text>3-chlorocatechol + O2 = (2E,4Z)-2-chloromuconate + 2 H(+)</text>
        <dbReference type="Rhea" id="RHEA:48568"/>
        <dbReference type="ChEBI" id="CHEBI:15378"/>
        <dbReference type="ChEBI" id="CHEBI:15379"/>
        <dbReference type="ChEBI" id="CHEBI:19504"/>
        <dbReference type="ChEBI" id="CHEBI:27715"/>
    </reaction>
</comment>
<comment type="catalytic activity">
    <reaction evidence="2">
        <text>3,4-dichlorocatechol + O2 = (2Z,4Z)-2,3-dichloromuconate + 2 H(+)</text>
        <dbReference type="Rhea" id="RHEA:48980"/>
        <dbReference type="ChEBI" id="CHEBI:15378"/>
        <dbReference type="ChEBI" id="CHEBI:15379"/>
        <dbReference type="ChEBI" id="CHEBI:90882"/>
        <dbReference type="ChEBI" id="CHEBI:91011"/>
    </reaction>
</comment>
<comment type="catalytic activity">
    <reaction evidence="2">
        <text>3,5-dichlorocatechol + O2 = (2E,4E)-2,4-dichloromuconate + 2 H(+)</text>
        <dbReference type="Rhea" id="RHEA:48572"/>
        <dbReference type="ChEBI" id="CHEBI:11438"/>
        <dbReference type="ChEBI" id="CHEBI:15378"/>
        <dbReference type="ChEBI" id="CHEBI:15379"/>
        <dbReference type="ChEBI" id="CHEBI:15788"/>
    </reaction>
</comment>
<comment type="catalytic activity">
    <reaction evidence="2">
        <text>3,6-dichlorocatechol + O2 = (2E,4E)-2,5-dichloromuconate + H(+)</text>
        <dbReference type="Rhea" id="RHEA:35055"/>
        <dbReference type="ChEBI" id="CHEBI:15378"/>
        <dbReference type="ChEBI" id="CHEBI:15379"/>
        <dbReference type="ChEBI" id="CHEBI:19375"/>
        <dbReference type="ChEBI" id="CHEBI:77767"/>
    </reaction>
</comment>
<comment type="catalytic activity">
    <reaction evidence="2">
        <text>3,4,6-trichlorocatechol + O2 = (2Z,4E)-2,3,5-trichloromuconate + H(+)</text>
        <dbReference type="Rhea" id="RHEA:51880"/>
        <dbReference type="ChEBI" id="CHEBI:15378"/>
        <dbReference type="ChEBI" id="CHEBI:15379"/>
        <dbReference type="ChEBI" id="CHEBI:19298"/>
        <dbReference type="ChEBI" id="CHEBI:134391"/>
    </reaction>
</comment>
<comment type="cofactor">
    <cofactor evidence="1">
        <name>Fe(3+)</name>
        <dbReference type="ChEBI" id="CHEBI:29034"/>
    </cofactor>
    <text evidence="1">Binds 1 Fe(3+) ion per subunit.</text>
</comment>
<comment type="pathway">
    <text evidence="5">Xenobiotic degradation.</text>
</comment>
<comment type="similarity">
    <text evidence="4">Belongs to the intradiol ring-cleavage dioxygenase family.</text>
</comment>